<protein>
    <recommendedName>
        <fullName evidence="1">Glycerol kinase</fullName>
        <ecNumber evidence="1">2.7.1.30</ecNumber>
    </recommendedName>
    <alternativeName>
        <fullName evidence="1">ATP:glycerol 3-phosphotransferase</fullName>
    </alternativeName>
    <alternativeName>
        <fullName evidence="1">Glycerokinase</fullName>
        <shortName evidence="1">GK</shortName>
    </alternativeName>
</protein>
<gene>
    <name evidence="1" type="primary">glpK</name>
    <name type="ordered locus">Pmob_0284</name>
</gene>
<evidence type="ECO:0000255" key="1">
    <source>
        <dbReference type="HAMAP-Rule" id="MF_00186"/>
    </source>
</evidence>
<feature type="chain" id="PRO_1000077423" description="Glycerol kinase">
    <location>
        <begin position="1"/>
        <end position="498"/>
    </location>
</feature>
<feature type="binding site" evidence="1">
    <location>
        <position position="12"/>
    </location>
    <ligand>
        <name>ADP</name>
        <dbReference type="ChEBI" id="CHEBI:456216"/>
    </ligand>
</feature>
<feature type="binding site" evidence="1">
    <location>
        <position position="12"/>
    </location>
    <ligand>
        <name>ATP</name>
        <dbReference type="ChEBI" id="CHEBI:30616"/>
    </ligand>
</feature>
<feature type="binding site" evidence="1">
    <location>
        <position position="12"/>
    </location>
    <ligand>
        <name>sn-glycerol 3-phosphate</name>
        <dbReference type="ChEBI" id="CHEBI:57597"/>
    </ligand>
</feature>
<feature type="binding site" evidence="1">
    <location>
        <position position="13"/>
    </location>
    <ligand>
        <name>ATP</name>
        <dbReference type="ChEBI" id="CHEBI:30616"/>
    </ligand>
</feature>
<feature type="binding site" evidence="1">
    <location>
        <position position="14"/>
    </location>
    <ligand>
        <name>ATP</name>
        <dbReference type="ChEBI" id="CHEBI:30616"/>
    </ligand>
</feature>
<feature type="binding site" evidence="1">
    <location>
        <position position="16"/>
    </location>
    <ligand>
        <name>ADP</name>
        <dbReference type="ChEBI" id="CHEBI:456216"/>
    </ligand>
</feature>
<feature type="binding site" evidence="1">
    <location>
        <position position="82"/>
    </location>
    <ligand>
        <name>glycerol</name>
        <dbReference type="ChEBI" id="CHEBI:17754"/>
    </ligand>
</feature>
<feature type="binding site" evidence="1">
    <location>
        <position position="82"/>
    </location>
    <ligand>
        <name>sn-glycerol 3-phosphate</name>
        <dbReference type="ChEBI" id="CHEBI:57597"/>
    </ligand>
</feature>
<feature type="binding site" evidence="1">
    <location>
        <position position="83"/>
    </location>
    <ligand>
        <name>glycerol</name>
        <dbReference type="ChEBI" id="CHEBI:17754"/>
    </ligand>
</feature>
<feature type="binding site" evidence="1">
    <location>
        <position position="83"/>
    </location>
    <ligand>
        <name>sn-glycerol 3-phosphate</name>
        <dbReference type="ChEBI" id="CHEBI:57597"/>
    </ligand>
</feature>
<feature type="binding site" evidence="1">
    <location>
        <position position="134"/>
    </location>
    <ligand>
        <name>glycerol</name>
        <dbReference type="ChEBI" id="CHEBI:17754"/>
    </ligand>
</feature>
<feature type="binding site" evidence="1">
    <location>
        <position position="134"/>
    </location>
    <ligand>
        <name>sn-glycerol 3-phosphate</name>
        <dbReference type="ChEBI" id="CHEBI:57597"/>
    </ligand>
</feature>
<feature type="binding site" evidence="1">
    <location>
        <position position="243"/>
    </location>
    <ligand>
        <name>glycerol</name>
        <dbReference type="ChEBI" id="CHEBI:17754"/>
    </ligand>
</feature>
<feature type="binding site" evidence="1">
    <location>
        <position position="243"/>
    </location>
    <ligand>
        <name>sn-glycerol 3-phosphate</name>
        <dbReference type="ChEBI" id="CHEBI:57597"/>
    </ligand>
</feature>
<feature type="binding site" evidence="1">
    <location>
        <position position="244"/>
    </location>
    <ligand>
        <name>glycerol</name>
        <dbReference type="ChEBI" id="CHEBI:17754"/>
    </ligand>
</feature>
<feature type="binding site" evidence="1">
    <location>
        <position position="265"/>
    </location>
    <ligand>
        <name>ADP</name>
        <dbReference type="ChEBI" id="CHEBI:456216"/>
    </ligand>
</feature>
<feature type="binding site" evidence="1">
    <location>
        <position position="265"/>
    </location>
    <ligand>
        <name>ATP</name>
        <dbReference type="ChEBI" id="CHEBI:30616"/>
    </ligand>
</feature>
<feature type="binding site" evidence="1">
    <location>
        <position position="308"/>
    </location>
    <ligand>
        <name>ADP</name>
        <dbReference type="ChEBI" id="CHEBI:456216"/>
    </ligand>
</feature>
<feature type="binding site" evidence="1">
    <location>
        <position position="308"/>
    </location>
    <ligand>
        <name>ATP</name>
        <dbReference type="ChEBI" id="CHEBI:30616"/>
    </ligand>
</feature>
<feature type="binding site" evidence="1">
    <location>
        <position position="312"/>
    </location>
    <ligand>
        <name>ATP</name>
        <dbReference type="ChEBI" id="CHEBI:30616"/>
    </ligand>
</feature>
<feature type="binding site" evidence="1">
    <location>
        <position position="409"/>
    </location>
    <ligand>
        <name>ADP</name>
        <dbReference type="ChEBI" id="CHEBI:456216"/>
    </ligand>
</feature>
<feature type="binding site" evidence="1">
    <location>
        <position position="409"/>
    </location>
    <ligand>
        <name>ATP</name>
        <dbReference type="ChEBI" id="CHEBI:30616"/>
    </ligand>
</feature>
<feature type="binding site" evidence="1">
    <location>
        <position position="413"/>
    </location>
    <ligand>
        <name>ADP</name>
        <dbReference type="ChEBI" id="CHEBI:456216"/>
    </ligand>
</feature>
<keyword id="KW-0067">ATP-binding</keyword>
<keyword id="KW-0319">Glycerol metabolism</keyword>
<keyword id="KW-0418">Kinase</keyword>
<keyword id="KW-0547">Nucleotide-binding</keyword>
<keyword id="KW-0808">Transferase</keyword>
<proteinExistence type="inferred from homology"/>
<name>GLPK_PETMO</name>
<reference key="1">
    <citation type="submission" date="2007-11" db="EMBL/GenBank/DDBJ databases">
        <title>Complete sequence of Petroga mobilis SJ95.</title>
        <authorList>
            <consortium name="US DOE Joint Genome Institute"/>
            <person name="Copeland A."/>
            <person name="Lucas S."/>
            <person name="Lapidus A."/>
            <person name="Barry K."/>
            <person name="Glavina del Rio T."/>
            <person name="Dalin E."/>
            <person name="Tice H."/>
            <person name="Pitluck S."/>
            <person name="Meincke L."/>
            <person name="Brettin T."/>
            <person name="Bruce D."/>
            <person name="Detter J.C."/>
            <person name="Han C."/>
            <person name="Kuske C.R."/>
            <person name="Schmutz J."/>
            <person name="Larimer F."/>
            <person name="Land M."/>
            <person name="Hauser L."/>
            <person name="Kyrpides N."/>
            <person name="Mikhailova N."/>
            <person name="Noll K."/>
            <person name="Richardson P."/>
        </authorList>
    </citation>
    <scope>NUCLEOTIDE SEQUENCE [LARGE SCALE GENOMIC DNA]</scope>
    <source>
        <strain>DSM 10674 / SJ95</strain>
    </source>
</reference>
<comment type="function">
    <text evidence="1">Key enzyme in the regulation of glycerol uptake and metabolism. Catalyzes the phosphorylation of glycerol to yield sn-glycerol 3-phosphate.</text>
</comment>
<comment type="catalytic activity">
    <reaction evidence="1">
        <text>glycerol + ATP = sn-glycerol 3-phosphate + ADP + H(+)</text>
        <dbReference type="Rhea" id="RHEA:21644"/>
        <dbReference type="ChEBI" id="CHEBI:15378"/>
        <dbReference type="ChEBI" id="CHEBI:17754"/>
        <dbReference type="ChEBI" id="CHEBI:30616"/>
        <dbReference type="ChEBI" id="CHEBI:57597"/>
        <dbReference type="ChEBI" id="CHEBI:456216"/>
        <dbReference type="EC" id="2.7.1.30"/>
    </reaction>
</comment>
<comment type="activity regulation">
    <text evidence="1">Inhibited by fructose 1,6-bisphosphate (FBP).</text>
</comment>
<comment type="pathway">
    <text evidence="1">Polyol metabolism; glycerol degradation via glycerol kinase pathway; sn-glycerol 3-phosphate from glycerol: step 1/1.</text>
</comment>
<comment type="similarity">
    <text evidence="1">Belongs to the FGGY kinase family.</text>
</comment>
<accession>A9BJ81</accession>
<organism>
    <name type="scientific">Petrotoga mobilis (strain DSM 10674 / SJ95)</name>
    <dbReference type="NCBI Taxonomy" id="403833"/>
    <lineage>
        <taxon>Bacteria</taxon>
        <taxon>Thermotogati</taxon>
        <taxon>Thermotogota</taxon>
        <taxon>Thermotogae</taxon>
        <taxon>Petrotogales</taxon>
        <taxon>Petrotogaceae</taxon>
        <taxon>Petrotoga</taxon>
    </lineage>
</organism>
<sequence length="498" mass="55399">MEKYILSIDQGTTSSRAIIFDHDGNVVSVAQQEFLQYYPKPGWVEHDPNEIWATTMGVIADAMARGNIKRSQISAIGITNQRETTVIWDAETGKPVHNAIVWQDRRTSKICDNLKEKGLEETIKHKTGLMVDAYFSGTKIKWILDNVEGAREKAEAGKLRFGTIDTWLIWKLTNGKVHVTDYTNASRTMIYNIFDLKWDEDLLKELNIPSSLLPEVKPSSQIYGNTDADVFGAEVPIAGIAGDQQAATFGQVCYEKGMAKNTYGTGCFMLMNTGEDPIESKHGLLTTIAYGINGKVNYALEGSIFVTGAAVQWLRDELKIVDSAADTEYYATKVKDNGGVYVVPAFVGLGAPYWDMYARGTIVGLTRGSSKAHIVRATLESIAYQTRDVLEAMEADSGIKLKTLRVDGGAALNNFLMQFQSDILGVEVERPVVNETTALGAAYLAGLAVGYWNGQEELLRKWKRDALFTPKMAEDERERLYAGWKRAVERARNWIEEK</sequence>
<dbReference type="EC" id="2.7.1.30" evidence="1"/>
<dbReference type="EMBL" id="CP000879">
    <property type="protein sequence ID" value="ABX31026.1"/>
    <property type="molecule type" value="Genomic_DNA"/>
</dbReference>
<dbReference type="RefSeq" id="WP_012208133.1">
    <property type="nucleotide sequence ID" value="NC_010003.1"/>
</dbReference>
<dbReference type="SMR" id="A9BJ81"/>
<dbReference type="STRING" id="403833.Pmob_0284"/>
<dbReference type="KEGG" id="pmo:Pmob_0284"/>
<dbReference type="eggNOG" id="COG0554">
    <property type="taxonomic scope" value="Bacteria"/>
</dbReference>
<dbReference type="HOGENOM" id="CLU_009281_2_3_0"/>
<dbReference type="OrthoDB" id="39631at2"/>
<dbReference type="UniPathway" id="UPA00618">
    <property type="reaction ID" value="UER00672"/>
</dbReference>
<dbReference type="Proteomes" id="UP000000789">
    <property type="component" value="Chromosome"/>
</dbReference>
<dbReference type="GO" id="GO:0005829">
    <property type="term" value="C:cytosol"/>
    <property type="evidence" value="ECO:0007669"/>
    <property type="project" value="TreeGrafter"/>
</dbReference>
<dbReference type="GO" id="GO:0005524">
    <property type="term" value="F:ATP binding"/>
    <property type="evidence" value="ECO:0007669"/>
    <property type="project" value="UniProtKB-UniRule"/>
</dbReference>
<dbReference type="GO" id="GO:0004370">
    <property type="term" value="F:glycerol kinase activity"/>
    <property type="evidence" value="ECO:0000250"/>
    <property type="project" value="UniProtKB"/>
</dbReference>
<dbReference type="GO" id="GO:0019563">
    <property type="term" value="P:glycerol catabolic process"/>
    <property type="evidence" value="ECO:0007669"/>
    <property type="project" value="UniProtKB-UniRule"/>
</dbReference>
<dbReference type="GO" id="GO:0006071">
    <property type="term" value="P:glycerol metabolic process"/>
    <property type="evidence" value="ECO:0000250"/>
    <property type="project" value="UniProtKB"/>
</dbReference>
<dbReference type="GO" id="GO:0006072">
    <property type="term" value="P:glycerol-3-phosphate metabolic process"/>
    <property type="evidence" value="ECO:0007669"/>
    <property type="project" value="InterPro"/>
</dbReference>
<dbReference type="CDD" id="cd07769">
    <property type="entry name" value="ASKHA_NBD_FGGY_GK"/>
    <property type="match status" value="1"/>
</dbReference>
<dbReference type="FunFam" id="3.30.420.40:FF:000007">
    <property type="entry name" value="Glycerol kinase"/>
    <property type="match status" value="1"/>
</dbReference>
<dbReference type="FunFam" id="3.30.420.40:FF:000008">
    <property type="entry name" value="Glycerol kinase"/>
    <property type="match status" value="1"/>
</dbReference>
<dbReference type="Gene3D" id="3.30.420.40">
    <property type="match status" value="2"/>
</dbReference>
<dbReference type="HAMAP" id="MF_00186">
    <property type="entry name" value="Glycerol_kin"/>
    <property type="match status" value="1"/>
</dbReference>
<dbReference type="InterPro" id="IPR043129">
    <property type="entry name" value="ATPase_NBD"/>
</dbReference>
<dbReference type="InterPro" id="IPR000577">
    <property type="entry name" value="Carb_kinase_FGGY"/>
</dbReference>
<dbReference type="InterPro" id="IPR018483">
    <property type="entry name" value="Carb_kinase_FGGY_CS"/>
</dbReference>
<dbReference type="InterPro" id="IPR018485">
    <property type="entry name" value="FGGY_C"/>
</dbReference>
<dbReference type="InterPro" id="IPR018484">
    <property type="entry name" value="FGGY_N"/>
</dbReference>
<dbReference type="InterPro" id="IPR005999">
    <property type="entry name" value="Glycerol_kin"/>
</dbReference>
<dbReference type="NCBIfam" id="TIGR01311">
    <property type="entry name" value="glycerol_kin"/>
    <property type="match status" value="1"/>
</dbReference>
<dbReference type="NCBIfam" id="NF000756">
    <property type="entry name" value="PRK00047.1"/>
    <property type="match status" value="1"/>
</dbReference>
<dbReference type="PANTHER" id="PTHR10196:SF69">
    <property type="entry name" value="GLYCEROL KINASE"/>
    <property type="match status" value="1"/>
</dbReference>
<dbReference type="PANTHER" id="PTHR10196">
    <property type="entry name" value="SUGAR KINASE"/>
    <property type="match status" value="1"/>
</dbReference>
<dbReference type="Pfam" id="PF02782">
    <property type="entry name" value="FGGY_C"/>
    <property type="match status" value="1"/>
</dbReference>
<dbReference type="Pfam" id="PF00370">
    <property type="entry name" value="FGGY_N"/>
    <property type="match status" value="1"/>
</dbReference>
<dbReference type="PIRSF" id="PIRSF000538">
    <property type="entry name" value="GlpK"/>
    <property type="match status" value="1"/>
</dbReference>
<dbReference type="SUPFAM" id="SSF53067">
    <property type="entry name" value="Actin-like ATPase domain"/>
    <property type="match status" value="2"/>
</dbReference>
<dbReference type="PROSITE" id="PS00933">
    <property type="entry name" value="FGGY_KINASES_1"/>
    <property type="match status" value="1"/>
</dbReference>
<dbReference type="PROSITE" id="PS00445">
    <property type="entry name" value="FGGY_KINASES_2"/>
    <property type="match status" value="1"/>
</dbReference>